<reference key="1">
    <citation type="journal article" date="1996" name="Yeast">
        <title>Sequencing a cosmid clone of Saccharomyces cerevisiae chromosome XIV reveals 12 new open reading frames (ORFs) and an ancient duplication of six ORFs.</title>
        <authorList>
            <person name="Poehlmann R."/>
            <person name="Philippsen P."/>
        </authorList>
    </citation>
    <scope>NUCLEOTIDE SEQUENCE [GENOMIC DNA]</scope>
    <source>
        <strain>ATCC 96604 / S288c / FY1679</strain>
    </source>
</reference>
<reference key="2">
    <citation type="journal article" date="1995" name="Yeast">
        <title>The sequence of a 44 420 bp fragment located on the left arm of chromosome XIV from Saccharomyces cerevisiae.</title>
        <authorList>
            <person name="Bergez P."/>
            <person name="Doignon F."/>
            <person name="Crouzet M."/>
        </authorList>
    </citation>
    <scope>NUCLEOTIDE SEQUENCE [GENOMIC DNA]</scope>
    <source>
        <strain>S288c / FY1676</strain>
    </source>
</reference>
<reference key="3">
    <citation type="journal article" date="1996" name="Yeast">
        <authorList>
            <person name="Bergez P."/>
            <person name="Doignon F."/>
            <person name="Crouzet M."/>
        </authorList>
    </citation>
    <scope>ERRATUM OF PUBMED:8533472</scope>
</reference>
<reference key="4">
    <citation type="journal article" date="1997" name="Nature">
        <title>The nucleotide sequence of Saccharomyces cerevisiae chromosome XIV and its evolutionary implications.</title>
        <authorList>
            <person name="Philippsen P."/>
            <person name="Kleine K."/>
            <person name="Poehlmann R."/>
            <person name="Duesterhoeft A."/>
            <person name="Hamberg K."/>
            <person name="Hegemann J.H."/>
            <person name="Obermaier B."/>
            <person name="Urrestarazu L.A."/>
            <person name="Aert R."/>
            <person name="Albermann K."/>
            <person name="Altmann R."/>
            <person name="Andre B."/>
            <person name="Baladron V."/>
            <person name="Ballesta J.P.G."/>
            <person name="Becam A.-M."/>
            <person name="Beinhauer J.D."/>
            <person name="Boskovic J."/>
            <person name="Buitrago M.J."/>
            <person name="Bussereau F."/>
            <person name="Coster F."/>
            <person name="Crouzet M."/>
            <person name="D'Angelo M."/>
            <person name="Dal Pero F."/>
            <person name="De Antoni A."/>
            <person name="del Rey F."/>
            <person name="Doignon F."/>
            <person name="Domdey H."/>
            <person name="Dubois E."/>
            <person name="Fiedler T.A."/>
            <person name="Fleig U."/>
            <person name="Floeth M."/>
            <person name="Fritz C."/>
            <person name="Gaillardin C."/>
            <person name="Garcia-Cantalejo J.M."/>
            <person name="Glansdorff N."/>
            <person name="Goffeau A."/>
            <person name="Gueldener U."/>
            <person name="Herbert C.J."/>
            <person name="Heumann K."/>
            <person name="Heuss-Neitzel D."/>
            <person name="Hilbert H."/>
            <person name="Hinni K."/>
            <person name="Iraqui Houssaini I."/>
            <person name="Jacquet M."/>
            <person name="Jimenez A."/>
            <person name="Jonniaux J.-L."/>
            <person name="Karpfinger-Hartl L."/>
            <person name="Lanfranchi G."/>
            <person name="Lepingle A."/>
            <person name="Levesque H."/>
            <person name="Lyck R."/>
            <person name="Maftahi M."/>
            <person name="Mallet L."/>
            <person name="Maurer C.T.C."/>
            <person name="Messenguy F."/>
            <person name="Mewes H.-W."/>
            <person name="Moestl D."/>
            <person name="Nasr F."/>
            <person name="Nicaud J.-M."/>
            <person name="Niedenthal R.K."/>
            <person name="Pandolfo D."/>
            <person name="Pierard A."/>
            <person name="Piravandi E."/>
            <person name="Planta R.J."/>
            <person name="Pohl T.M."/>
            <person name="Purnelle B."/>
            <person name="Rebischung C."/>
            <person name="Remacha M.A."/>
            <person name="Revuelta J.L."/>
            <person name="Rinke M."/>
            <person name="Saiz J.E."/>
            <person name="Sartorello F."/>
            <person name="Scherens B."/>
            <person name="Sen-Gupta M."/>
            <person name="Soler-Mira A."/>
            <person name="Urbanus J.H.M."/>
            <person name="Valle G."/>
            <person name="Van Dyck L."/>
            <person name="Verhasselt P."/>
            <person name="Vierendeels F."/>
            <person name="Vissers S."/>
            <person name="Voet M."/>
            <person name="Volckaert G."/>
            <person name="Wach A."/>
            <person name="Wambutt R."/>
            <person name="Wedler H."/>
            <person name="Zollner A."/>
            <person name="Hani J."/>
        </authorList>
    </citation>
    <scope>NUCLEOTIDE SEQUENCE [LARGE SCALE GENOMIC DNA]</scope>
    <source>
        <strain>ATCC 204508 / S288c</strain>
    </source>
</reference>
<reference key="5">
    <citation type="journal article" date="2014" name="G3 (Bethesda)">
        <title>The reference genome sequence of Saccharomyces cerevisiae: Then and now.</title>
        <authorList>
            <person name="Engel S.R."/>
            <person name="Dietrich F.S."/>
            <person name="Fisk D.G."/>
            <person name="Binkley G."/>
            <person name="Balakrishnan R."/>
            <person name="Costanzo M.C."/>
            <person name="Dwight S.S."/>
            <person name="Hitz B.C."/>
            <person name="Karra K."/>
            <person name="Nash R.S."/>
            <person name="Weng S."/>
            <person name="Wong E.D."/>
            <person name="Lloyd P."/>
            <person name="Skrzypek M.S."/>
            <person name="Miyasato S.R."/>
            <person name="Simison M."/>
            <person name="Cherry J.M."/>
        </authorList>
    </citation>
    <scope>GENOME REANNOTATION</scope>
    <source>
        <strain>ATCC 204508 / S288c</strain>
    </source>
</reference>
<reference key="6">
    <citation type="journal article" date="2007" name="Genome Res.">
        <title>Approaching a complete repository of sequence-verified protein-encoding clones for Saccharomyces cerevisiae.</title>
        <authorList>
            <person name="Hu Y."/>
            <person name="Rolfs A."/>
            <person name="Bhullar B."/>
            <person name="Murthy T.V.S."/>
            <person name="Zhu C."/>
            <person name="Berger M.F."/>
            <person name="Camargo A.A."/>
            <person name="Kelley F."/>
            <person name="McCarron S."/>
            <person name="Jepson D."/>
            <person name="Richardson A."/>
            <person name="Raphael J."/>
            <person name="Moreira D."/>
            <person name="Taycher E."/>
            <person name="Zuo D."/>
            <person name="Mohr S."/>
            <person name="Kane M.F."/>
            <person name="Williamson J."/>
            <person name="Simpson A.J.G."/>
            <person name="Bulyk M.L."/>
            <person name="Harlow E."/>
            <person name="Marsischky G."/>
            <person name="Kolodner R.D."/>
            <person name="LaBaer J."/>
        </authorList>
    </citation>
    <scope>NUCLEOTIDE SEQUENCE [GENOMIC DNA]</scope>
    <source>
        <strain>ATCC 204508 / S288c</strain>
    </source>
</reference>
<reference key="7">
    <citation type="journal article" date="1998" name="Yeast">
        <title>The list of cytoplasmic ribosomal proteins of Saccharomyces cerevisiae.</title>
        <authorList>
            <person name="Planta R.J."/>
            <person name="Mager W.H."/>
        </authorList>
    </citation>
    <scope>NOMENCLATURE</scope>
    <scope>SUBUNIT</scope>
</reference>
<reference key="8">
    <citation type="journal article" date="2003" name="Nature">
        <title>Global analysis of protein localization in budding yeast.</title>
        <authorList>
            <person name="Huh W.-K."/>
            <person name="Falvo J.V."/>
            <person name="Gerke L.C."/>
            <person name="Carroll A.S."/>
            <person name="Howson R.W."/>
            <person name="Weissman J.S."/>
            <person name="O'Shea E.K."/>
        </authorList>
    </citation>
    <scope>SUBCELLULAR LOCATION [LARGE SCALE ANALYSIS]</scope>
</reference>
<reference key="9">
    <citation type="journal article" date="2003" name="Nature">
        <title>Global analysis of protein expression in yeast.</title>
        <authorList>
            <person name="Ghaemmaghami S."/>
            <person name="Huh W.-K."/>
            <person name="Bower K."/>
            <person name="Howson R.W."/>
            <person name="Belle A."/>
            <person name="Dephoure N."/>
            <person name="O'Shea E.K."/>
            <person name="Weissman J.S."/>
        </authorList>
    </citation>
    <scope>LEVEL OF PROTEIN EXPRESSION [LARGE SCALE ANALYSIS]</scope>
</reference>
<reference key="10">
    <citation type="journal article" date="2011" name="Science">
        <title>The structure of the eukaryotic ribosome at 3.0 A resolution.</title>
        <authorList>
            <person name="Ben-Shem A."/>
            <person name="Garreau de Loubresse N."/>
            <person name="Melnikov S."/>
            <person name="Jenner L."/>
            <person name="Yusupova G."/>
            <person name="Yusupov M."/>
        </authorList>
    </citation>
    <scope>SUBUNIT</scope>
    <scope>SUBCELLULAR LOCATION</scope>
</reference>
<reference key="11">
    <citation type="journal article" date="2014" name="Curr. Opin. Struct. Biol.">
        <title>A new system for naming ribosomal proteins.</title>
        <authorList>
            <person name="Ban N."/>
            <person name="Beckmann R."/>
            <person name="Cate J.H.D."/>
            <person name="Dinman J.D."/>
            <person name="Dragon F."/>
            <person name="Ellis S.R."/>
            <person name="Lafontaine D.L.J."/>
            <person name="Lindahl L."/>
            <person name="Liljas A."/>
            <person name="Lipton J.M."/>
            <person name="McAlear M.A."/>
            <person name="Moore P.B."/>
            <person name="Noller H.F."/>
            <person name="Ortega J."/>
            <person name="Panse V.G."/>
            <person name="Ramakrishnan V."/>
            <person name="Spahn C.M.T."/>
            <person name="Steitz T.A."/>
            <person name="Tchorzewski M."/>
            <person name="Tollervey D."/>
            <person name="Warren A.J."/>
            <person name="Williamson J.R."/>
            <person name="Wilson D."/>
            <person name="Yonath A."/>
            <person name="Yusupov M."/>
        </authorList>
    </citation>
    <scope>NOMENCLATURE</scope>
</reference>
<organism>
    <name type="scientific">Saccharomyces cerevisiae (strain ATCC 204508 / S288c)</name>
    <name type="common">Baker's yeast</name>
    <dbReference type="NCBI Taxonomy" id="559292"/>
    <lineage>
        <taxon>Eukaryota</taxon>
        <taxon>Fungi</taxon>
        <taxon>Dikarya</taxon>
        <taxon>Ascomycota</taxon>
        <taxon>Saccharomycotina</taxon>
        <taxon>Saccharomycetes</taxon>
        <taxon>Saccharomycetales</taxon>
        <taxon>Saccharomycetaceae</taxon>
        <taxon>Saccharomyces</taxon>
    </lineage>
</organism>
<dbReference type="EMBL" id="X86470">
    <property type="protein sequence ID" value="CAA60195.1"/>
    <property type="molecule type" value="Genomic_DNA"/>
</dbReference>
<dbReference type="EMBL" id="U12141">
    <property type="protein sequence ID" value="AAA99644.1"/>
    <property type="molecule type" value="Genomic_DNA"/>
</dbReference>
<dbReference type="EMBL" id="Z71343">
    <property type="protein sequence ID" value="CAA95940.1"/>
    <property type="molecule type" value="Genomic_DNA"/>
</dbReference>
<dbReference type="EMBL" id="AY693129">
    <property type="protein sequence ID" value="AAT93148.1"/>
    <property type="molecule type" value="Genomic_DNA"/>
</dbReference>
<dbReference type="EMBL" id="BK006947">
    <property type="protein sequence ID" value="DAA10479.1"/>
    <property type="molecule type" value="Genomic_DNA"/>
</dbReference>
<dbReference type="PIR" id="S53915">
    <property type="entry name" value="S53915"/>
</dbReference>
<dbReference type="RefSeq" id="NP_014332.1">
    <property type="nucleotide sequence ID" value="NM_001182905.1"/>
</dbReference>
<dbReference type="PDB" id="6WOO">
    <property type="method" value="EM"/>
    <property type="resolution" value="2.90 A"/>
    <property type="chains" value="H=1-190"/>
</dbReference>
<dbReference type="PDBsum" id="6WOO"/>
<dbReference type="EMDB" id="EMD-21859"/>
<dbReference type="SMR" id="P51401"/>
<dbReference type="BioGRID" id="35756">
    <property type="interactions" value="279"/>
</dbReference>
<dbReference type="ComplexPortal" id="CPX-1601">
    <property type="entry name" value="60S cytosolic large ribosomal subunit"/>
</dbReference>
<dbReference type="FunCoup" id="P51401">
    <property type="interactions" value="1072"/>
</dbReference>
<dbReference type="IntAct" id="P51401">
    <property type="interactions" value="50"/>
</dbReference>
<dbReference type="MINT" id="P51401"/>
<dbReference type="STRING" id="4932.YNL067W"/>
<dbReference type="iPTMnet" id="P51401"/>
<dbReference type="PaxDb" id="4932-YNL067W"/>
<dbReference type="PeptideAtlas" id="P51401"/>
<dbReference type="EnsemblFungi" id="YNL067W_mRNA">
    <property type="protein sequence ID" value="YNL067W"/>
    <property type="gene ID" value="YNL067W"/>
</dbReference>
<dbReference type="GeneID" id="855658"/>
<dbReference type="KEGG" id="sce:YNL067W"/>
<dbReference type="AGR" id="SGD:S000005011"/>
<dbReference type="SGD" id="S000005011">
    <property type="gene designation" value="RPL9B"/>
</dbReference>
<dbReference type="VEuPathDB" id="FungiDB:YNL067W"/>
<dbReference type="eggNOG" id="KOG3255">
    <property type="taxonomic scope" value="Eukaryota"/>
</dbReference>
<dbReference type="GeneTree" id="ENSGT00390000015224"/>
<dbReference type="HOGENOM" id="CLU_065464_0_0_1"/>
<dbReference type="InParanoid" id="P51401"/>
<dbReference type="OMA" id="YAHFPMK"/>
<dbReference type="OrthoDB" id="10252633at2759"/>
<dbReference type="BioCyc" id="YEAST:G3O-33097-MONOMER"/>
<dbReference type="Reactome" id="R-SCE-156827">
    <property type="pathway name" value="L13a-mediated translational silencing of Ceruloplasmin expression"/>
</dbReference>
<dbReference type="Reactome" id="R-SCE-1799339">
    <property type="pathway name" value="SRP-dependent cotranslational protein targeting to membrane"/>
</dbReference>
<dbReference type="Reactome" id="R-SCE-72689">
    <property type="pathway name" value="Formation of a pool of free 40S subunits"/>
</dbReference>
<dbReference type="Reactome" id="R-SCE-72706">
    <property type="pathway name" value="GTP hydrolysis and joining of the 60S ribosomal subunit"/>
</dbReference>
<dbReference type="Reactome" id="R-SCE-975956">
    <property type="pathway name" value="Nonsense Mediated Decay (NMD) independent of the Exon Junction Complex (EJC)"/>
</dbReference>
<dbReference type="Reactome" id="R-SCE-975957">
    <property type="pathway name" value="Nonsense Mediated Decay (NMD) enhanced by the Exon Junction Complex (EJC)"/>
</dbReference>
<dbReference type="BioGRID-ORCS" id="855658">
    <property type="hits" value="9 hits in 10 CRISPR screens"/>
</dbReference>
<dbReference type="ChiTaRS" id="RPL8B">
    <property type="organism name" value="yeast"/>
</dbReference>
<dbReference type="PRO" id="PR:P51401"/>
<dbReference type="Proteomes" id="UP000002311">
    <property type="component" value="Chromosome XIV"/>
</dbReference>
<dbReference type="RNAct" id="P51401">
    <property type="molecule type" value="protein"/>
</dbReference>
<dbReference type="GO" id="GO:0005829">
    <property type="term" value="C:cytosol"/>
    <property type="evidence" value="ECO:0000304"/>
    <property type="project" value="Reactome"/>
</dbReference>
<dbReference type="GO" id="GO:0022625">
    <property type="term" value="C:cytosolic large ribosomal subunit"/>
    <property type="evidence" value="ECO:0000314"/>
    <property type="project" value="SGD"/>
</dbReference>
<dbReference type="GO" id="GO:0019843">
    <property type="term" value="F:rRNA binding"/>
    <property type="evidence" value="ECO:0007669"/>
    <property type="project" value="InterPro"/>
</dbReference>
<dbReference type="GO" id="GO:0003735">
    <property type="term" value="F:structural constituent of ribosome"/>
    <property type="evidence" value="ECO:0000314"/>
    <property type="project" value="SGD"/>
</dbReference>
<dbReference type="GO" id="GO:0002181">
    <property type="term" value="P:cytoplasmic translation"/>
    <property type="evidence" value="ECO:0000314"/>
    <property type="project" value="SGD"/>
</dbReference>
<dbReference type="FunFam" id="3.90.930.12:FF:000003">
    <property type="entry name" value="60S ribosomal protein L9"/>
    <property type="match status" value="1"/>
</dbReference>
<dbReference type="FunFam" id="3.90.930.12:FF:000004">
    <property type="entry name" value="60S ribosomal protein L9"/>
    <property type="match status" value="1"/>
</dbReference>
<dbReference type="Gene3D" id="3.90.930.12">
    <property type="entry name" value="Ribosomal protein L6, alpha-beta domain"/>
    <property type="match status" value="2"/>
</dbReference>
<dbReference type="InterPro" id="IPR000702">
    <property type="entry name" value="Ribosomal_uL6-like"/>
</dbReference>
<dbReference type="InterPro" id="IPR036789">
    <property type="entry name" value="Ribosomal_uL6-like_a/b-dom_sf"/>
</dbReference>
<dbReference type="InterPro" id="IPR020040">
    <property type="entry name" value="Ribosomal_uL6_a/b-dom"/>
</dbReference>
<dbReference type="InterPro" id="IPR002359">
    <property type="entry name" value="Ribosomal_uL6_CS2"/>
</dbReference>
<dbReference type="PANTHER" id="PTHR11655:SF16">
    <property type="entry name" value="60S RIBOSOMAL PROTEIN L9"/>
    <property type="match status" value="1"/>
</dbReference>
<dbReference type="PANTHER" id="PTHR11655">
    <property type="entry name" value="60S/50S RIBOSOMAL PROTEIN L6/L9"/>
    <property type="match status" value="1"/>
</dbReference>
<dbReference type="Pfam" id="PF00347">
    <property type="entry name" value="Ribosomal_L6"/>
    <property type="match status" value="2"/>
</dbReference>
<dbReference type="PIRSF" id="PIRSF002162">
    <property type="entry name" value="Ribosomal_L6"/>
    <property type="match status" value="1"/>
</dbReference>
<dbReference type="SUPFAM" id="SSF56053">
    <property type="entry name" value="Ribosomal protein L6"/>
    <property type="match status" value="2"/>
</dbReference>
<dbReference type="PROSITE" id="PS00700">
    <property type="entry name" value="RIBOSOMAL_L6_2"/>
    <property type="match status" value="1"/>
</dbReference>
<name>RL9B_YEAST</name>
<feature type="chain" id="PRO_0000131112" description="Large ribosomal subunit protein uL6B">
    <location>
        <begin position="1"/>
        <end position="191"/>
    </location>
</feature>
<accession>P51401</accession>
<accession>D6W1B3</accession>
<proteinExistence type="evidence at protein level"/>
<comment type="function">
    <text evidence="7">Component of the ribosome, a large ribonucleoprotein complex responsible for the synthesis of proteins in the cell. The small ribosomal subunit (SSU) binds messenger RNAs (mRNAs) and translates the encoded message by selecting cognate aminoacyl-transfer RNA (tRNA) molecules. The large subunit (LSU) contains the ribosomal catalytic site termed the peptidyl transferase center (PTC), which catalyzes the formation of peptide bonds, thereby polymerizing the amino acids delivered by tRNAs into a polypeptide chain. The nascent polypeptides leave the ribosome through a tunnel in the LSU and interact with protein factors that function in enzymatic processing, targeting, and the membrane insertion of nascent chains at the exit of the ribosomal tunnel.</text>
</comment>
<comment type="subunit">
    <text evidence="3 8">Component of the large ribosomal subunit (LSU). Mature yeast ribosomes consist of a small (40S) and a large (60S) subunit. The 40S small subunit contains 1 molecule of ribosomal RNA (18S rRNA) and 33 different proteins (encoded by 57 genes). The large 60S subunit contains 3 rRNA molecules (25S, 5.8S and 5S rRNA) and 46 different proteins (encoded by 81 genes) (PubMed:22096102, PubMed:9559554).</text>
</comment>
<comment type="subcellular location">
    <subcellularLocation>
        <location evidence="1 3">Cytoplasm</location>
    </subcellularLocation>
</comment>
<comment type="miscellaneous">
    <text evidence="2">Present with 76000 molecules/cell in log phase SD medium.</text>
</comment>
<comment type="miscellaneous">
    <text evidence="6">There are 2 genes for uL6 in yeast.</text>
</comment>
<comment type="similarity">
    <text evidence="6">Belongs to the universal ribosomal protein uL6 family.</text>
</comment>
<gene>
    <name evidence="5" type="primary">RPL9B</name>
    <name type="synonym">RPL8B</name>
    <name type="ordered locus">YNL067W</name>
    <name type="ORF">N2406</name>
    <name type="ORF">YNL2406W</name>
</gene>
<evidence type="ECO:0000269" key="1">
    <source>
    </source>
</evidence>
<evidence type="ECO:0000269" key="2">
    <source>
    </source>
</evidence>
<evidence type="ECO:0000269" key="3">
    <source>
    </source>
</evidence>
<evidence type="ECO:0000303" key="4">
    <source>
    </source>
</evidence>
<evidence type="ECO:0000303" key="5">
    <source>
    </source>
</evidence>
<evidence type="ECO:0000305" key="6"/>
<evidence type="ECO:0000305" key="7">
    <source>
    </source>
</evidence>
<evidence type="ECO:0000305" key="8">
    <source>
    </source>
</evidence>
<sequence>MKYIQTEQQIEIPEGVTVSIKSRIVKVVGPRGTLTKNLKHIDVTFTKVNNQLIKVAVHNGDRKHVAALRTVKSLVDNMITGVTKGYKYKMRYVYAHFPINVNIVEKDGAKFIEVRNFLGDKKIRNVPVRDGVTIEFSTNVKDEIVLSGNSVEDVSQNAADLQQICRVRNKDIRKFLDGIYVSHKGFIVEDM</sequence>
<protein>
    <recommendedName>
        <fullName evidence="4">Large ribosomal subunit protein uL6B</fullName>
    </recommendedName>
    <alternativeName>
        <fullName evidence="5">60S ribosomal protein L9-B</fullName>
    </alternativeName>
    <alternativeName>
        <fullName>L8</fullName>
    </alternativeName>
    <alternativeName>
        <fullName>RP24</fullName>
    </alternativeName>
    <alternativeName>
        <fullName>YL11</fullName>
    </alternativeName>
</protein>
<keyword id="KW-0002">3D-structure</keyword>
<keyword id="KW-0963">Cytoplasm</keyword>
<keyword id="KW-1185">Reference proteome</keyword>
<keyword id="KW-0687">Ribonucleoprotein</keyword>
<keyword id="KW-0689">Ribosomal protein</keyword>